<evidence type="ECO:0000250" key="1">
    <source>
        <dbReference type="UniProtKB" id="P56778"/>
    </source>
</evidence>
<evidence type="ECO:0000255" key="2">
    <source>
        <dbReference type="HAMAP-Rule" id="MF_01496"/>
    </source>
</evidence>
<sequence length="473" mass="51940">MKTLYSLRRFYHVETLFNGTLALAGRDQETTGFAWWAGNARLINLSGKLLGAHVAHAGLIVFWAGAMNLFEVAHFVPEKPMYEQGLILLPHLATLGWGVGPGGEVIDTFPYFVSGVLHLISSAVLGFGGIYHALLGPETLEESFPFFGYVWKDRNKMTTILGIHLILLGVGAFLLVFKALYFGGVYDTWAPGGGDVRKITNLTLSPSVIFGYLLKSPFGGEGWIVSVDDLEDIIEGHVWLGSICIFGGIWHILTKPFAWARRALVWSGEAYLSYSLAALSVCGFIACCFVWFNNTAYPSEFYGPTGPEASQAQAFTFLVRDQRLGANVGSAQGPTGLGKYLMRSPTGEVIFGGETMRFWDLRAPWLEPLRGPNGLDLSRLKKDIQPWQERRSAEYMTHAPLGSLNSVGGVATEINAVNYVSPRSWLSTSHFVLGFFLFVGHLWHAGRARAAAAGFEKGIDRDFEPVLSMTPLN</sequence>
<comment type="function">
    <text evidence="2">One of the components of the core complex of photosystem II (PSII). It binds chlorophyll and helps catalyze the primary light-induced photochemical processes of PSII. PSII is a light-driven water:plastoquinone oxidoreductase, using light energy to abstract electrons from H(2)O, generating O(2) and a proton gradient subsequently used for ATP formation.</text>
</comment>
<comment type="cofactor">
    <text evidence="2">Binds multiple chlorophylls and provides some of the ligands for the Ca-4Mn-5O cluster of the oxygen-evolving complex. It may also provide a ligand for a Cl- that is required for oxygen evolution. PSII binds additional chlorophylls, carotenoids and specific lipids.</text>
</comment>
<comment type="subunit">
    <text evidence="2">PSII is composed of 1 copy each of membrane proteins PsbA, PsbB, PsbC, PsbD, PsbE, PsbF, PsbH, PsbI, PsbJ, PsbK, PsbL, PsbM, PsbT, PsbX, PsbY, PsbZ, Psb30/Ycf12, at least 3 peripheral proteins of the oxygen-evolving complex and a large number of cofactors. It forms dimeric complexes.</text>
</comment>
<comment type="subcellular location">
    <subcellularLocation>
        <location evidence="2">Plastid</location>
        <location evidence="2">Chloroplast thylakoid membrane</location>
        <topology evidence="2">Multi-pass membrane protein</topology>
    </subcellularLocation>
</comment>
<comment type="similarity">
    <text evidence="2">Belongs to the PsbB/PsbC family. PsbC subfamily.</text>
</comment>
<proteinExistence type="inferred from homology"/>
<dbReference type="EMBL" id="AP009372">
    <property type="protein sequence ID" value="BAF50282.1"/>
    <property type="molecule type" value="Genomic_DNA"/>
</dbReference>
<dbReference type="RefSeq" id="YP_001123458.1">
    <property type="nucleotide sequence ID" value="NC_009271.1"/>
</dbReference>
<dbReference type="SMR" id="A4QKS7"/>
<dbReference type="GeneID" id="4962656"/>
<dbReference type="GO" id="GO:0009535">
    <property type="term" value="C:chloroplast thylakoid membrane"/>
    <property type="evidence" value="ECO:0007669"/>
    <property type="project" value="UniProtKB-SubCell"/>
</dbReference>
<dbReference type="GO" id="GO:0009523">
    <property type="term" value="C:photosystem II"/>
    <property type="evidence" value="ECO:0007669"/>
    <property type="project" value="UniProtKB-KW"/>
</dbReference>
<dbReference type="GO" id="GO:0016168">
    <property type="term" value="F:chlorophyll binding"/>
    <property type="evidence" value="ECO:0007669"/>
    <property type="project" value="UniProtKB-UniRule"/>
</dbReference>
<dbReference type="GO" id="GO:0045156">
    <property type="term" value="F:electron transporter, transferring electrons within the cyclic electron transport pathway of photosynthesis activity"/>
    <property type="evidence" value="ECO:0007669"/>
    <property type="project" value="InterPro"/>
</dbReference>
<dbReference type="GO" id="GO:0046872">
    <property type="term" value="F:metal ion binding"/>
    <property type="evidence" value="ECO:0007669"/>
    <property type="project" value="UniProtKB-KW"/>
</dbReference>
<dbReference type="GO" id="GO:0009772">
    <property type="term" value="P:photosynthetic electron transport in photosystem II"/>
    <property type="evidence" value="ECO:0007669"/>
    <property type="project" value="InterPro"/>
</dbReference>
<dbReference type="FunFam" id="1.10.10.670:FF:000001">
    <property type="entry name" value="Photosystem II CP43 reaction center protein"/>
    <property type="match status" value="1"/>
</dbReference>
<dbReference type="Gene3D" id="1.10.10.670">
    <property type="entry name" value="photosystem ii from thermosynechococcus elongatus"/>
    <property type="match status" value="1"/>
</dbReference>
<dbReference type="HAMAP" id="MF_01496">
    <property type="entry name" value="PSII_PsbC_CP43"/>
    <property type="match status" value="1"/>
</dbReference>
<dbReference type="InterPro" id="IPR000932">
    <property type="entry name" value="PS_antenna-like"/>
</dbReference>
<dbReference type="InterPro" id="IPR036001">
    <property type="entry name" value="PS_II_antenna-like_sf"/>
</dbReference>
<dbReference type="InterPro" id="IPR005869">
    <property type="entry name" value="PSII_PsbC"/>
</dbReference>
<dbReference type="InterPro" id="IPR044900">
    <property type="entry name" value="PSII_PsbC_sf"/>
</dbReference>
<dbReference type="NCBIfam" id="TIGR01153">
    <property type="entry name" value="psbC"/>
    <property type="match status" value="1"/>
</dbReference>
<dbReference type="Pfam" id="PF00421">
    <property type="entry name" value="PSII"/>
    <property type="match status" value="1"/>
</dbReference>
<dbReference type="SUPFAM" id="SSF161077">
    <property type="entry name" value="Photosystem II antenna protein-like"/>
    <property type="match status" value="1"/>
</dbReference>
<feature type="propeptide" id="PRO_0000431131" evidence="2">
    <location>
        <begin position="1"/>
        <end position="14"/>
    </location>
</feature>
<feature type="chain" id="PRO_0000361356" description="Photosystem II CP43 reaction center protein" evidence="2">
    <location>
        <begin position="15"/>
        <end position="473"/>
    </location>
</feature>
<feature type="transmembrane region" description="Helical" evidence="2">
    <location>
        <begin position="69"/>
        <end position="93"/>
    </location>
</feature>
<feature type="transmembrane region" description="Helical" evidence="2">
    <location>
        <begin position="134"/>
        <end position="155"/>
    </location>
</feature>
<feature type="transmembrane region" description="Helical" evidence="2">
    <location>
        <begin position="178"/>
        <end position="200"/>
    </location>
</feature>
<feature type="transmembrane region" description="Helical" evidence="2">
    <location>
        <begin position="255"/>
        <end position="275"/>
    </location>
</feature>
<feature type="transmembrane region" description="Helical" evidence="2">
    <location>
        <begin position="291"/>
        <end position="312"/>
    </location>
</feature>
<feature type="transmembrane region" description="Helical" evidence="2">
    <location>
        <begin position="447"/>
        <end position="471"/>
    </location>
</feature>
<feature type="binding site" evidence="2">
    <location>
        <position position="367"/>
    </location>
    <ligand>
        <name>[CaMn4O5] cluster</name>
        <dbReference type="ChEBI" id="CHEBI:189552"/>
    </ligand>
</feature>
<feature type="modified residue" description="N-acetylthreonine" evidence="1 2">
    <location>
        <position position="15"/>
    </location>
</feature>
<feature type="modified residue" description="Phosphothreonine" evidence="1 2">
    <location>
        <position position="15"/>
    </location>
</feature>
<protein>
    <recommendedName>
        <fullName evidence="2">Photosystem II CP43 reaction center protein</fullName>
    </recommendedName>
    <alternativeName>
        <fullName evidence="2">PSII 43 kDa protein</fullName>
    </alternativeName>
    <alternativeName>
        <fullName evidence="2">Protein CP-43</fullName>
    </alternativeName>
</protein>
<geneLocation type="chloroplast"/>
<name>PSBC_CRUWA</name>
<organism>
    <name type="scientific">Crucihimalaya wallichii</name>
    <name type="common">Rock-cress</name>
    <name type="synonym">Arabidopsis campestris</name>
    <dbReference type="NCBI Taxonomy" id="78192"/>
    <lineage>
        <taxon>Eukaryota</taxon>
        <taxon>Viridiplantae</taxon>
        <taxon>Streptophyta</taxon>
        <taxon>Embryophyta</taxon>
        <taxon>Tracheophyta</taxon>
        <taxon>Spermatophyta</taxon>
        <taxon>Magnoliopsida</taxon>
        <taxon>eudicotyledons</taxon>
        <taxon>Gunneridae</taxon>
        <taxon>Pentapetalae</taxon>
        <taxon>rosids</taxon>
        <taxon>malvids</taxon>
        <taxon>Brassicales</taxon>
        <taxon>Brassicaceae</taxon>
        <taxon>Crucihimalayeae</taxon>
        <taxon>Crucihimalaya</taxon>
    </lineage>
</organism>
<keyword id="KW-0007">Acetylation</keyword>
<keyword id="KW-0148">Chlorophyll</keyword>
<keyword id="KW-0150">Chloroplast</keyword>
<keyword id="KW-0157">Chromophore</keyword>
<keyword id="KW-0464">Manganese</keyword>
<keyword id="KW-0472">Membrane</keyword>
<keyword id="KW-0479">Metal-binding</keyword>
<keyword id="KW-0597">Phosphoprotein</keyword>
<keyword id="KW-0602">Photosynthesis</keyword>
<keyword id="KW-0604">Photosystem II</keyword>
<keyword id="KW-0934">Plastid</keyword>
<keyword id="KW-0793">Thylakoid</keyword>
<keyword id="KW-0812">Transmembrane</keyword>
<keyword id="KW-1133">Transmembrane helix</keyword>
<reference key="1">
    <citation type="submission" date="2007-03" db="EMBL/GenBank/DDBJ databases">
        <title>Sequencing analysis of Crucihimalaya wallichii chloroplast DNA.</title>
        <authorList>
            <person name="Hosouchi T."/>
            <person name="Tsuruoka H."/>
            <person name="Kotani H."/>
        </authorList>
    </citation>
    <scope>NUCLEOTIDE SEQUENCE [LARGE SCALE GENOMIC DNA]</scope>
</reference>
<gene>
    <name evidence="2" type="primary">psbC</name>
</gene>
<accession>A4QKS7</accession>